<accession>P9WF27</accession>
<accession>L0T976</accession>
<accession>P71803</accession>
<sequence length="439" mass="47219">MTGRRLARFPAFRAGVAQDDDVGSTLSQGSTTGVLSGPNWSYWPSRVLGSADPTTIAHRHGTHRITSPDETWLALQPFLAPAGITGVADVTWLDCLGIPTVQAVRPASLTLSVSQGKAASYRAAQVSAVMESLEGWHAENVTADLWSATARDLEADLTYDPAQLRHRPGSLYHAGVKLDWMVATTLLTGRRTWVPWTAVLVNVATRDCWEPPMFEMDTTGLASGNCYDEATLHALYEVMERHSVAAAVAGETMFEVPTDDVAGSDSAHLVEMIRDAGDDVDLARIDVWDGYYCFAAELTSATLEVTFGGFGLHHDPNVALSRAITEAAQSRITAISGAREDLPSAIYHRFGRVHTYAKARKTSLRLNRARPTPWRVPDVDSLPELVASAATAVANRSGTEPLAVVCDFADACVPVVKVLAPGLVLSSASPMRTPLQEAE</sequence>
<organism>
    <name type="scientific">Mycobacterium tuberculosis (strain ATCC 25618 / H37Rv)</name>
    <dbReference type="NCBI Taxonomy" id="83332"/>
    <lineage>
        <taxon>Bacteria</taxon>
        <taxon>Bacillati</taxon>
        <taxon>Actinomycetota</taxon>
        <taxon>Actinomycetes</taxon>
        <taxon>Mycobacteriales</taxon>
        <taxon>Mycobacteriaceae</taxon>
        <taxon>Mycobacterium</taxon>
        <taxon>Mycobacterium tuberculosis complex</taxon>
    </lineage>
</organism>
<reference key="1">
    <citation type="journal article" date="1998" name="Nature">
        <title>Deciphering the biology of Mycobacterium tuberculosis from the complete genome sequence.</title>
        <authorList>
            <person name="Cole S.T."/>
            <person name="Brosch R."/>
            <person name="Parkhill J."/>
            <person name="Garnier T."/>
            <person name="Churcher C.M."/>
            <person name="Harris D.E."/>
            <person name="Gordon S.V."/>
            <person name="Eiglmeier K."/>
            <person name="Gas S."/>
            <person name="Barry C.E. III"/>
            <person name="Tekaia F."/>
            <person name="Badcock K."/>
            <person name="Basham D."/>
            <person name="Brown D."/>
            <person name="Chillingworth T."/>
            <person name="Connor R."/>
            <person name="Davies R.M."/>
            <person name="Devlin K."/>
            <person name="Feltwell T."/>
            <person name="Gentles S."/>
            <person name="Hamlin N."/>
            <person name="Holroyd S."/>
            <person name="Hornsby T."/>
            <person name="Jagels K."/>
            <person name="Krogh A."/>
            <person name="McLean J."/>
            <person name="Moule S."/>
            <person name="Murphy L.D."/>
            <person name="Oliver S."/>
            <person name="Osborne J."/>
            <person name="Quail M.A."/>
            <person name="Rajandream M.A."/>
            <person name="Rogers J."/>
            <person name="Rutter S."/>
            <person name="Seeger K."/>
            <person name="Skelton S."/>
            <person name="Squares S."/>
            <person name="Squares R."/>
            <person name="Sulston J.E."/>
            <person name="Taylor K."/>
            <person name="Whitehead S."/>
            <person name="Barrell B.G."/>
        </authorList>
    </citation>
    <scope>NUCLEOTIDE SEQUENCE [LARGE SCALE GENOMIC DNA]</scope>
    <source>
        <strain>ATCC 25618 / H37Rv</strain>
    </source>
</reference>
<name>Y1375_MYCTU</name>
<protein>
    <recommendedName>
        <fullName>Uncharacterized protein Rv1375</fullName>
    </recommendedName>
</protein>
<evidence type="ECO:0000255" key="1">
    <source>
        <dbReference type="PROSITE-ProRule" id="PRU00999"/>
    </source>
</evidence>
<feature type="chain" id="PRO_0000144978" description="Uncharacterized protein Rv1375">
    <location>
        <begin position="1"/>
        <end position="439"/>
    </location>
</feature>
<feature type="domain" description="YcaO" evidence="1">
    <location>
        <begin position="116"/>
        <end position="439"/>
    </location>
</feature>
<gene>
    <name type="ordered locus">Rv1375</name>
    <name type="ORF">MTCY02B12.09</name>
</gene>
<keyword id="KW-1185">Reference proteome</keyword>
<proteinExistence type="predicted"/>
<dbReference type="EMBL" id="AL123456">
    <property type="protein sequence ID" value="CCP44134.1"/>
    <property type="molecule type" value="Genomic_DNA"/>
</dbReference>
<dbReference type="PIR" id="D70958">
    <property type="entry name" value="D70958"/>
</dbReference>
<dbReference type="RefSeq" id="NP_215891.1">
    <property type="nucleotide sequence ID" value="NC_000962.3"/>
</dbReference>
<dbReference type="RefSeq" id="WP_003898850.1">
    <property type="nucleotide sequence ID" value="NZ_NVQJ01000050.1"/>
</dbReference>
<dbReference type="SMR" id="P9WF27"/>
<dbReference type="STRING" id="83332.Rv1375"/>
<dbReference type="PaxDb" id="83332-Rv1375"/>
<dbReference type="DNASU" id="886778"/>
<dbReference type="GeneID" id="886778"/>
<dbReference type="KEGG" id="mtu:Rv1375"/>
<dbReference type="KEGG" id="mtv:RVBD_1375"/>
<dbReference type="PATRIC" id="fig|83332.111.peg.1534"/>
<dbReference type="TubercuList" id="Rv1375"/>
<dbReference type="eggNOG" id="COG1944">
    <property type="taxonomic scope" value="Bacteria"/>
</dbReference>
<dbReference type="InParanoid" id="P9WF27"/>
<dbReference type="OrthoDB" id="109999at2"/>
<dbReference type="PhylomeDB" id="P9WF27"/>
<dbReference type="Proteomes" id="UP000001584">
    <property type="component" value="Chromosome"/>
</dbReference>
<dbReference type="Gene3D" id="3.30.1330.230">
    <property type="match status" value="1"/>
</dbReference>
<dbReference type="InterPro" id="IPR003776">
    <property type="entry name" value="YcaO-like_dom"/>
</dbReference>
<dbReference type="NCBIfam" id="TIGR00702">
    <property type="entry name" value="YcaO-type kinase domain"/>
    <property type="match status" value="1"/>
</dbReference>
<dbReference type="PANTHER" id="PTHR37809">
    <property type="entry name" value="RIBOSOMAL PROTEIN S12 METHYLTHIOTRANSFERASE ACCESSORY FACTOR YCAO"/>
    <property type="match status" value="1"/>
</dbReference>
<dbReference type="PANTHER" id="PTHR37809:SF1">
    <property type="entry name" value="RIBOSOMAL PROTEIN S12 METHYLTHIOTRANSFERASE ACCESSORY FACTOR YCAO"/>
    <property type="match status" value="1"/>
</dbReference>
<dbReference type="Pfam" id="PF02624">
    <property type="entry name" value="YcaO"/>
    <property type="match status" value="1"/>
</dbReference>
<dbReference type="PROSITE" id="PS51664">
    <property type="entry name" value="YCAO"/>
    <property type="match status" value="1"/>
</dbReference>